<gene>
    <name evidence="1" type="primary">rplS</name>
    <name type="ordered locus">RC0152</name>
</gene>
<comment type="function">
    <text evidence="1">This protein is located at the 30S-50S ribosomal subunit interface and may play a role in the structure and function of the aminoacyl-tRNA binding site.</text>
</comment>
<comment type="similarity">
    <text evidence="1">Belongs to the bacterial ribosomal protein bL19 family.</text>
</comment>
<accession>Q92JB5</accession>
<keyword id="KW-0687">Ribonucleoprotein</keyword>
<keyword id="KW-0689">Ribosomal protein</keyword>
<feature type="chain" id="PRO_0000163518" description="Large ribosomal subunit protein bL19">
    <location>
        <begin position="1"/>
        <end position="138"/>
    </location>
</feature>
<dbReference type="EMBL" id="AE006914">
    <property type="protein sequence ID" value="AAL02690.1"/>
    <property type="molecule type" value="Genomic_DNA"/>
</dbReference>
<dbReference type="PIR" id="H97718">
    <property type="entry name" value="H97718"/>
</dbReference>
<dbReference type="RefSeq" id="WP_010976829.1">
    <property type="nucleotide sequence ID" value="NC_003103.1"/>
</dbReference>
<dbReference type="SMR" id="Q92JB5"/>
<dbReference type="GeneID" id="928042"/>
<dbReference type="KEGG" id="rco:RC0152"/>
<dbReference type="PATRIC" id="fig|272944.4.peg.180"/>
<dbReference type="HOGENOM" id="CLU_103507_1_0_5"/>
<dbReference type="Proteomes" id="UP000000816">
    <property type="component" value="Chromosome"/>
</dbReference>
<dbReference type="GO" id="GO:0022625">
    <property type="term" value="C:cytosolic large ribosomal subunit"/>
    <property type="evidence" value="ECO:0007669"/>
    <property type="project" value="TreeGrafter"/>
</dbReference>
<dbReference type="GO" id="GO:0003735">
    <property type="term" value="F:structural constituent of ribosome"/>
    <property type="evidence" value="ECO:0007669"/>
    <property type="project" value="InterPro"/>
</dbReference>
<dbReference type="GO" id="GO:0006412">
    <property type="term" value="P:translation"/>
    <property type="evidence" value="ECO:0007669"/>
    <property type="project" value="UniProtKB-UniRule"/>
</dbReference>
<dbReference type="Gene3D" id="2.30.30.790">
    <property type="match status" value="1"/>
</dbReference>
<dbReference type="HAMAP" id="MF_00402">
    <property type="entry name" value="Ribosomal_bL19"/>
    <property type="match status" value="1"/>
</dbReference>
<dbReference type="InterPro" id="IPR001857">
    <property type="entry name" value="Ribosomal_bL19"/>
</dbReference>
<dbReference type="InterPro" id="IPR018257">
    <property type="entry name" value="Ribosomal_bL19_CS"/>
</dbReference>
<dbReference type="InterPro" id="IPR038657">
    <property type="entry name" value="Ribosomal_bL19_sf"/>
</dbReference>
<dbReference type="InterPro" id="IPR008991">
    <property type="entry name" value="Translation_prot_SH3-like_sf"/>
</dbReference>
<dbReference type="NCBIfam" id="TIGR01024">
    <property type="entry name" value="rplS_bact"/>
    <property type="match status" value="1"/>
</dbReference>
<dbReference type="PANTHER" id="PTHR15680:SF9">
    <property type="entry name" value="LARGE RIBOSOMAL SUBUNIT PROTEIN BL19M"/>
    <property type="match status" value="1"/>
</dbReference>
<dbReference type="PANTHER" id="PTHR15680">
    <property type="entry name" value="RIBOSOMAL PROTEIN L19"/>
    <property type="match status" value="1"/>
</dbReference>
<dbReference type="Pfam" id="PF01245">
    <property type="entry name" value="Ribosomal_L19"/>
    <property type="match status" value="1"/>
</dbReference>
<dbReference type="PIRSF" id="PIRSF002191">
    <property type="entry name" value="Ribosomal_L19"/>
    <property type="match status" value="1"/>
</dbReference>
<dbReference type="PRINTS" id="PR00061">
    <property type="entry name" value="RIBOSOMALL19"/>
</dbReference>
<dbReference type="SUPFAM" id="SSF50104">
    <property type="entry name" value="Translation proteins SH3-like domain"/>
    <property type="match status" value="1"/>
</dbReference>
<dbReference type="PROSITE" id="PS01015">
    <property type="entry name" value="RIBOSOMAL_L19"/>
    <property type="match status" value="1"/>
</dbReference>
<sequence>MNIIDRFEQENISKRTANKKIPDFEAGDTVKVTVKIIDRSIEKDGKEKLTERFQAYEGVVIAKRNRGITSSFLVRKISHGEGVERRFMTYSPMVHSIDVVKYGVVRRAKLYYLRNRSGKSARIKERHIPIAKTKAAKA</sequence>
<protein>
    <recommendedName>
        <fullName evidence="1">Large ribosomal subunit protein bL19</fullName>
    </recommendedName>
    <alternativeName>
        <fullName evidence="2">50S ribosomal protein L19</fullName>
    </alternativeName>
</protein>
<reference key="1">
    <citation type="journal article" date="2001" name="Science">
        <title>Mechanisms of evolution in Rickettsia conorii and R. prowazekii.</title>
        <authorList>
            <person name="Ogata H."/>
            <person name="Audic S."/>
            <person name="Renesto-Audiffren P."/>
            <person name="Fournier P.-E."/>
            <person name="Barbe V."/>
            <person name="Samson D."/>
            <person name="Roux V."/>
            <person name="Cossart P."/>
            <person name="Weissenbach J."/>
            <person name="Claverie J.-M."/>
            <person name="Raoult D."/>
        </authorList>
    </citation>
    <scope>NUCLEOTIDE SEQUENCE [LARGE SCALE GENOMIC DNA]</scope>
    <source>
        <strain>ATCC VR-613 / Malish 7</strain>
    </source>
</reference>
<proteinExistence type="inferred from homology"/>
<organism>
    <name type="scientific">Rickettsia conorii (strain ATCC VR-613 / Malish 7)</name>
    <dbReference type="NCBI Taxonomy" id="272944"/>
    <lineage>
        <taxon>Bacteria</taxon>
        <taxon>Pseudomonadati</taxon>
        <taxon>Pseudomonadota</taxon>
        <taxon>Alphaproteobacteria</taxon>
        <taxon>Rickettsiales</taxon>
        <taxon>Rickettsiaceae</taxon>
        <taxon>Rickettsieae</taxon>
        <taxon>Rickettsia</taxon>
        <taxon>spotted fever group</taxon>
    </lineage>
</organism>
<evidence type="ECO:0000255" key="1">
    <source>
        <dbReference type="HAMAP-Rule" id="MF_00402"/>
    </source>
</evidence>
<evidence type="ECO:0000305" key="2"/>
<name>RL19_RICCN</name>